<keyword id="KW-1064">Adaptive immunity</keyword>
<keyword id="KW-0903">Direct protein sequencing</keyword>
<keyword id="KW-1015">Disulfide bond</keyword>
<keyword id="KW-0391">Immunity</keyword>
<keyword id="KW-1280">Immunoglobulin</keyword>
<keyword id="KW-1185">Reference proteome</keyword>
<reference key="1">
    <citation type="journal article" date="1978" name="Nature">
        <title>Rearrangement of genetic information may produce immunoglobulin diversity.</title>
        <authorList>
            <person name="Weigert M."/>
            <person name="Gatmaitan L."/>
            <person name="Loh E."/>
            <person name="Schilling J."/>
            <person name="Hood L.E."/>
        </authorList>
    </citation>
    <scope>PROTEIN SEQUENCE</scope>
</reference>
<feature type="chain" id="PRO_0000059790" description="Ig kappa chain V-III region PC 7210">
    <location>
        <begin position="1"/>
        <end position="110" status="greater than"/>
    </location>
</feature>
<feature type="region of interest" description="Framework-1">
    <location>
        <begin position="1"/>
        <end position="23"/>
    </location>
</feature>
<feature type="region of interest" description="Complementarity-determining-1">
    <location>
        <begin position="24"/>
        <end position="38"/>
    </location>
</feature>
<feature type="region of interest" description="Framework-2">
    <location>
        <begin position="39"/>
        <end position="53"/>
    </location>
</feature>
<feature type="region of interest" description="Complementarity-determining-2">
    <location>
        <begin position="54"/>
        <end position="60"/>
    </location>
</feature>
<feature type="region of interest" description="Framework-3">
    <location>
        <begin position="61"/>
        <end position="92"/>
    </location>
</feature>
<feature type="region of interest" description="Complementarity-determining-3">
    <location>
        <begin position="93"/>
        <end position="100"/>
    </location>
</feature>
<feature type="region of interest" description="Framework-4">
    <location>
        <begin position="101"/>
        <end position="110"/>
    </location>
</feature>
<feature type="disulfide bond" evidence="1">
    <location>
        <begin position="23"/>
        <end position="92"/>
    </location>
</feature>
<feature type="non-terminal residue">
    <location>
        <position position="110"/>
    </location>
</feature>
<protein>
    <recommendedName>
        <fullName>Ig kappa chain V-III region PC 7210</fullName>
    </recommendedName>
</protein>
<accession>P01668</accession>
<name>KV3AG_MOUSE</name>
<dbReference type="PIR" id="D01937">
    <property type="entry name" value="KVMS10"/>
</dbReference>
<dbReference type="SMR" id="P01668"/>
<dbReference type="FunCoup" id="P01668">
    <property type="interactions" value="757"/>
</dbReference>
<dbReference type="jPOST" id="P01668"/>
<dbReference type="InParanoid" id="P01668"/>
<dbReference type="Proteomes" id="UP000000589">
    <property type="component" value="Unplaced"/>
</dbReference>
<dbReference type="RNAct" id="P01668">
    <property type="molecule type" value="protein"/>
</dbReference>
<dbReference type="GO" id="GO:0019814">
    <property type="term" value="C:immunoglobulin complex"/>
    <property type="evidence" value="ECO:0000318"/>
    <property type="project" value="GO_Central"/>
</dbReference>
<dbReference type="GO" id="GO:0002250">
    <property type="term" value="P:adaptive immune response"/>
    <property type="evidence" value="ECO:0007669"/>
    <property type="project" value="UniProtKB-KW"/>
</dbReference>
<dbReference type="GO" id="GO:0006955">
    <property type="term" value="P:immune response"/>
    <property type="evidence" value="ECO:0000318"/>
    <property type="project" value="GO_Central"/>
</dbReference>
<dbReference type="CDD" id="cd04980">
    <property type="entry name" value="IgV_L_kappa"/>
    <property type="match status" value="1"/>
</dbReference>
<dbReference type="FunFam" id="2.60.40.10:FF:000350">
    <property type="entry name" value="Immunoglobulin kappa chain variable 18-36"/>
    <property type="match status" value="1"/>
</dbReference>
<dbReference type="Gene3D" id="2.60.40.10">
    <property type="entry name" value="Immunoglobulins"/>
    <property type="match status" value="1"/>
</dbReference>
<dbReference type="InterPro" id="IPR007110">
    <property type="entry name" value="Ig-like_dom"/>
</dbReference>
<dbReference type="InterPro" id="IPR036179">
    <property type="entry name" value="Ig-like_dom_sf"/>
</dbReference>
<dbReference type="InterPro" id="IPR013783">
    <property type="entry name" value="Ig-like_fold"/>
</dbReference>
<dbReference type="InterPro" id="IPR003599">
    <property type="entry name" value="Ig_sub"/>
</dbReference>
<dbReference type="InterPro" id="IPR013106">
    <property type="entry name" value="Ig_V-set"/>
</dbReference>
<dbReference type="InterPro" id="IPR050150">
    <property type="entry name" value="IgV_Light_Chain"/>
</dbReference>
<dbReference type="PANTHER" id="PTHR23267">
    <property type="entry name" value="IMMUNOGLOBULIN LIGHT CHAIN"/>
    <property type="match status" value="1"/>
</dbReference>
<dbReference type="Pfam" id="PF07686">
    <property type="entry name" value="V-set"/>
    <property type="match status" value="1"/>
</dbReference>
<dbReference type="SMART" id="SM00409">
    <property type="entry name" value="IG"/>
    <property type="match status" value="1"/>
</dbReference>
<dbReference type="SMART" id="SM00406">
    <property type="entry name" value="IGv"/>
    <property type="match status" value="1"/>
</dbReference>
<dbReference type="SUPFAM" id="SSF48726">
    <property type="entry name" value="Immunoglobulin"/>
    <property type="match status" value="1"/>
</dbReference>
<dbReference type="PROSITE" id="PS50835">
    <property type="entry name" value="IG_LIKE"/>
    <property type="match status" value="1"/>
</dbReference>
<proteinExistence type="evidence at protein level"/>
<sequence length="110" mass="11950">DIVLTQSPASLAVSLGQRATISCKASQSLDYDGDSYMNWYQQKPGQPPKLLIYAASNLESGIPARFSGSGSGTDFTLNIHPVEEEDAATYYCHQSEDPWTFGSGTKLEIK</sequence>
<evidence type="ECO:0000255" key="1">
    <source>
        <dbReference type="PROSITE-ProRule" id="PRU00114"/>
    </source>
</evidence>
<organism>
    <name type="scientific">Mus musculus</name>
    <name type="common">Mouse</name>
    <dbReference type="NCBI Taxonomy" id="10090"/>
    <lineage>
        <taxon>Eukaryota</taxon>
        <taxon>Metazoa</taxon>
        <taxon>Chordata</taxon>
        <taxon>Craniata</taxon>
        <taxon>Vertebrata</taxon>
        <taxon>Euteleostomi</taxon>
        <taxon>Mammalia</taxon>
        <taxon>Eutheria</taxon>
        <taxon>Euarchontoglires</taxon>
        <taxon>Glires</taxon>
        <taxon>Rodentia</taxon>
        <taxon>Myomorpha</taxon>
        <taxon>Muroidea</taxon>
        <taxon>Muridae</taxon>
        <taxon>Murinae</taxon>
        <taxon>Mus</taxon>
        <taxon>Mus</taxon>
    </lineage>
</organism>